<feature type="chain" id="PRO_1000024829" description="Ribonuclease PH">
    <location>
        <begin position="1"/>
        <end position="259"/>
    </location>
</feature>
<feature type="binding site" evidence="1">
    <location>
        <position position="88"/>
    </location>
    <ligand>
        <name>phosphate</name>
        <dbReference type="ChEBI" id="CHEBI:43474"/>
        <note>substrate</note>
    </ligand>
</feature>
<feature type="binding site" evidence="1">
    <location>
        <begin position="126"/>
        <end position="128"/>
    </location>
    <ligand>
        <name>phosphate</name>
        <dbReference type="ChEBI" id="CHEBI:43474"/>
        <note>substrate</note>
    </ligand>
</feature>
<accession>A1KID0</accession>
<reference key="1">
    <citation type="journal article" date="2007" name="Proc. Natl. Acad. Sci. U.S.A.">
        <title>Genome plasticity of BCG and impact on vaccine efficacy.</title>
        <authorList>
            <person name="Brosch R."/>
            <person name="Gordon S.V."/>
            <person name="Garnier T."/>
            <person name="Eiglmeier K."/>
            <person name="Frigui W."/>
            <person name="Valenti P."/>
            <person name="Dos Santos S."/>
            <person name="Duthoy S."/>
            <person name="Lacroix C."/>
            <person name="Garcia-Pelayo C."/>
            <person name="Inwald J.K."/>
            <person name="Golby P."/>
            <person name="Garcia J.N."/>
            <person name="Hewinson R.G."/>
            <person name="Behr M.A."/>
            <person name="Quail M.A."/>
            <person name="Churcher C."/>
            <person name="Barrell B.G."/>
            <person name="Parkhill J."/>
            <person name="Cole S.T."/>
        </authorList>
    </citation>
    <scope>NUCLEOTIDE SEQUENCE [LARGE SCALE GENOMIC DNA]</scope>
    <source>
        <strain>BCG / Pasteur 1173P2</strain>
    </source>
</reference>
<organism>
    <name type="scientific">Mycobacterium bovis (strain BCG / Pasteur 1173P2)</name>
    <dbReference type="NCBI Taxonomy" id="410289"/>
    <lineage>
        <taxon>Bacteria</taxon>
        <taxon>Bacillati</taxon>
        <taxon>Actinomycetota</taxon>
        <taxon>Actinomycetes</taxon>
        <taxon>Mycobacteriales</taxon>
        <taxon>Mycobacteriaceae</taxon>
        <taxon>Mycobacterium</taxon>
        <taxon>Mycobacterium tuberculosis complex</taxon>
    </lineage>
</organism>
<proteinExistence type="inferred from homology"/>
<gene>
    <name evidence="1" type="primary">rph</name>
    <name type="ordered locus">BCG_1402</name>
</gene>
<protein>
    <recommendedName>
        <fullName evidence="1">Ribonuclease PH</fullName>
        <shortName evidence="1">RNase PH</shortName>
        <ecNumber evidence="1">2.7.7.56</ecNumber>
    </recommendedName>
    <alternativeName>
        <fullName evidence="1">tRNA nucleotidyltransferase</fullName>
    </alternativeName>
</protein>
<dbReference type="EC" id="2.7.7.56" evidence="1"/>
<dbReference type="EMBL" id="AM408590">
    <property type="protein sequence ID" value="CAL71389.1"/>
    <property type="molecule type" value="Genomic_DNA"/>
</dbReference>
<dbReference type="RefSeq" id="WP_003406926.1">
    <property type="nucleotide sequence ID" value="NC_008769.1"/>
</dbReference>
<dbReference type="SMR" id="A1KID0"/>
<dbReference type="KEGG" id="mbb:BCG_1402"/>
<dbReference type="HOGENOM" id="CLU_050858_0_0_11"/>
<dbReference type="Proteomes" id="UP000001472">
    <property type="component" value="Chromosome"/>
</dbReference>
<dbReference type="GO" id="GO:0000175">
    <property type="term" value="F:3'-5'-RNA exonuclease activity"/>
    <property type="evidence" value="ECO:0007669"/>
    <property type="project" value="UniProtKB-UniRule"/>
</dbReference>
<dbReference type="GO" id="GO:0000049">
    <property type="term" value="F:tRNA binding"/>
    <property type="evidence" value="ECO:0007669"/>
    <property type="project" value="UniProtKB-UniRule"/>
</dbReference>
<dbReference type="GO" id="GO:0009022">
    <property type="term" value="F:tRNA nucleotidyltransferase activity"/>
    <property type="evidence" value="ECO:0007669"/>
    <property type="project" value="UniProtKB-UniRule"/>
</dbReference>
<dbReference type="GO" id="GO:0016075">
    <property type="term" value="P:rRNA catabolic process"/>
    <property type="evidence" value="ECO:0007669"/>
    <property type="project" value="UniProtKB-UniRule"/>
</dbReference>
<dbReference type="GO" id="GO:0006364">
    <property type="term" value="P:rRNA processing"/>
    <property type="evidence" value="ECO:0007669"/>
    <property type="project" value="UniProtKB-KW"/>
</dbReference>
<dbReference type="GO" id="GO:0008033">
    <property type="term" value="P:tRNA processing"/>
    <property type="evidence" value="ECO:0007669"/>
    <property type="project" value="UniProtKB-UniRule"/>
</dbReference>
<dbReference type="CDD" id="cd11362">
    <property type="entry name" value="RNase_PH_bact"/>
    <property type="match status" value="1"/>
</dbReference>
<dbReference type="FunFam" id="3.30.230.70:FF:000003">
    <property type="entry name" value="Ribonuclease PH"/>
    <property type="match status" value="1"/>
</dbReference>
<dbReference type="Gene3D" id="3.30.230.70">
    <property type="entry name" value="GHMP Kinase, N-terminal domain"/>
    <property type="match status" value="1"/>
</dbReference>
<dbReference type="HAMAP" id="MF_00564">
    <property type="entry name" value="RNase_PH"/>
    <property type="match status" value="1"/>
</dbReference>
<dbReference type="InterPro" id="IPR001247">
    <property type="entry name" value="ExoRNase_PH_dom1"/>
</dbReference>
<dbReference type="InterPro" id="IPR015847">
    <property type="entry name" value="ExoRNase_PH_dom2"/>
</dbReference>
<dbReference type="InterPro" id="IPR036345">
    <property type="entry name" value="ExoRNase_PH_dom2_sf"/>
</dbReference>
<dbReference type="InterPro" id="IPR027408">
    <property type="entry name" value="PNPase/RNase_PH_dom_sf"/>
</dbReference>
<dbReference type="InterPro" id="IPR020568">
    <property type="entry name" value="Ribosomal_Su5_D2-typ_SF"/>
</dbReference>
<dbReference type="InterPro" id="IPR050080">
    <property type="entry name" value="RNase_PH"/>
</dbReference>
<dbReference type="InterPro" id="IPR002381">
    <property type="entry name" value="RNase_PH_bac-type"/>
</dbReference>
<dbReference type="InterPro" id="IPR018336">
    <property type="entry name" value="RNase_PH_CS"/>
</dbReference>
<dbReference type="NCBIfam" id="TIGR01966">
    <property type="entry name" value="RNasePH"/>
    <property type="match status" value="1"/>
</dbReference>
<dbReference type="PANTHER" id="PTHR11953">
    <property type="entry name" value="EXOSOME COMPLEX COMPONENT"/>
    <property type="match status" value="1"/>
</dbReference>
<dbReference type="PANTHER" id="PTHR11953:SF0">
    <property type="entry name" value="EXOSOME COMPLEX COMPONENT RRP41"/>
    <property type="match status" value="1"/>
</dbReference>
<dbReference type="Pfam" id="PF01138">
    <property type="entry name" value="RNase_PH"/>
    <property type="match status" value="1"/>
</dbReference>
<dbReference type="Pfam" id="PF03725">
    <property type="entry name" value="RNase_PH_C"/>
    <property type="match status" value="1"/>
</dbReference>
<dbReference type="SUPFAM" id="SSF55666">
    <property type="entry name" value="Ribonuclease PH domain 2-like"/>
    <property type="match status" value="1"/>
</dbReference>
<dbReference type="SUPFAM" id="SSF54211">
    <property type="entry name" value="Ribosomal protein S5 domain 2-like"/>
    <property type="match status" value="1"/>
</dbReference>
<dbReference type="PROSITE" id="PS01277">
    <property type="entry name" value="RIBONUCLEASE_PH"/>
    <property type="match status" value="1"/>
</dbReference>
<evidence type="ECO:0000255" key="1">
    <source>
        <dbReference type="HAMAP-Rule" id="MF_00564"/>
    </source>
</evidence>
<comment type="function">
    <text evidence="1">Phosphorolytic 3'-5' exoribonuclease that plays an important role in tRNA 3'-end maturation. Removes nucleotide residues following the 3'-CCA terminus of tRNAs; can also add nucleotides to the ends of RNA molecules by using nucleoside diphosphates as substrates, but this may not be physiologically important. Probably plays a role in initiation of 16S rRNA degradation (leading to ribosome degradation) during starvation.</text>
</comment>
<comment type="catalytic activity">
    <reaction evidence="1">
        <text>tRNA(n+1) + phosphate = tRNA(n) + a ribonucleoside 5'-diphosphate</text>
        <dbReference type="Rhea" id="RHEA:10628"/>
        <dbReference type="Rhea" id="RHEA-COMP:17343"/>
        <dbReference type="Rhea" id="RHEA-COMP:17344"/>
        <dbReference type="ChEBI" id="CHEBI:43474"/>
        <dbReference type="ChEBI" id="CHEBI:57930"/>
        <dbReference type="ChEBI" id="CHEBI:173114"/>
        <dbReference type="EC" id="2.7.7.56"/>
    </reaction>
</comment>
<comment type="subunit">
    <text evidence="1">Homohexameric ring arranged as a trimer of dimers.</text>
</comment>
<comment type="similarity">
    <text evidence="1">Belongs to the RNase PH family.</text>
</comment>
<keyword id="KW-0548">Nucleotidyltransferase</keyword>
<keyword id="KW-0694">RNA-binding</keyword>
<keyword id="KW-0698">rRNA processing</keyword>
<keyword id="KW-0808">Transferase</keyword>
<keyword id="KW-0819">tRNA processing</keyword>
<keyword id="KW-0820">tRNA-binding</keyword>
<sequence length="259" mass="27351">MSKREDGRLDHELRPVIITRGFTENPAGSVLIEFGHTKVLCTASVTEGVPRWRKATGLGWLTAEYAMLPSATHSRSDRESVRGRLSGRTQEISRLIGRSLRACIDLAALGENTIAIDCDVLQADGGTRTAAITGAYVALADAVTYLSAAGKLSDPRPLSCAIAAVSVGVVDGRIRVDLPYEEDSRAEVDMNVVATDTGTLVEIQGTGEGATFARSTLDKLLDMALGACDTLFAAQRDALALPYPGVLPQGPPPPKAFGT</sequence>
<name>RNPH_MYCBP</name>